<protein>
    <recommendedName>
        <fullName evidence="1">UDP-N-acetylenolpyruvoylglucosamine reductase</fullName>
        <ecNumber evidence="1">1.3.1.98</ecNumber>
    </recommendedName>
    <alternativeName>
        <fullName evidence="1">UDP-N-acetylmuramate dehydrogenase</fullName>
    </alternativeName>
</protein>
<accession>Q255M5</accession>
<feature type="chain" id="PRO_1000002877" description="UDP-N-acetylenolpyruvoylglucosamine reductase">
    <location>
        <begin position="1"/>
        <end position="296"/>
    </location>
</feature>
<feature type="domain" description="FAD-binding PCMH-type" evidence="1">
    <location>
        <begin position="26"/>
        <end position="191"/>
    </location>
</feature>
<feature type="active site" evidence="1">
    <location>
        <position position="170"/>
    </location>
</feature>
<feature type="active site" description="Proton donor" evidence="1">
    <location>
        <position position="218"/>
    </location>
</feature>
<feature type="active site" evidence="1">
    <location>
        <position position="287"/>
    </location>
</feature>
<organism>
    <name type="scientific">Chlamydia felis (strain Fe/C-56)</name>
    <name type="common">Chlamydophila felis</name>
    <dbReference type="NCBI Taxonomy" id="264202"/>
    <lineage>
        <taxon>Bacteria</taxon>
        <taxon>Pseudomonadati</taxon>
        <taxon>Chlamydiota</taxon>
        <taxon>Chlamydiia</taxon>
        <taxon>Chlamydiales</taxon>
        <taxon>Chlamydiaceae</taxon>
        <taxon>Chlamydia/Chlamydophila group</taxon>
        <taxon>Chlamydia</taxon>
    </lineage>
</organism>
<gene>
    <name evidence="1" type="primary">murB</name>
    <name type="ordered locus">CF0241</name>
</gene>
<evidence type="ECO:0000255" key="1">
    <source>
        <dbReference type="HAMAP-Rule" id="MF_00037"/>
    </source>
</evidence>
<proteinExistence type="inferred from homology"/>
<name>MURB_CHLFF</name>
<keyword id="KW-0131">Cell cycle</keyword>
<keyword id="KW-0132">Cell division</keyword>
<keyword id="KW-0133">Cell shape</keyword>
<keyword id="KW-0961">Cell wall biogenesis/degradation</keyword>
<keyword id="KW-0963">Cytoplasm</keyword>
<keyword id="KW-0274">FAD</keyword>
<keyword id="KW-0285">Flavoprotein</keyword>
<keyword id="KW-0521">NADP</keyword>
<keyword id="KW-0560">Oxidoreductase</keyword>
<keyword id="KW-0573">Peptidoglycan synthesis</keyword>
<comment type="function">
    <text evidence="1">Cell wall formation.</text>
</comment>
<comment type="catalytic activity">
    <reaction evidence="1">
        <text>UDP-N-acetyl-alpha-D-muramate + NADP(+) = UDP-N-acetyl-3-O-(1-carboxyvinyl)-alpha-D-glucosamine + NADPH + H(+)</text>
        <dbReference type="Rhea" id="RHEA:12248"/>
        <dbReference type="ChEBI" id="CHEBI:15378"/>
        <dbReference type="ChEBI" id="CHEBI:57783"/>
        <dbReference type="ChEBI" id="CHEBI:58349"/>
        <dbReference type="ChEBI" id="CHEBI:68483"/>
        <dbReference type="ChEBI" id="CHEBI:70757"/>
        <dbReference type="EC" id="1.3.1.98"/>
    </reaction>
</comment>
<comment type="cofactor">
    <cofactor evidence="1">
        <name>FAD</name>
        <dbReference type="ChEBI" id="CHEBI:57692"/>
    </cofactor>
</comment>
<comment type="pathway">
    <text evidence="1">Cell wall biogenesis; peptidoglycan biosynthesis.</text>
</comment>
<comment type="subcellular location">
    <subcellularLocation>
        <location evidence="1">Cytoplasm</location>
    </subcellularLocation>
</comment>
<comment type="similarity">
    <text evidence="1">Belongs to the MurB family.</text>
</comment>
<sequence length="296" mass="32538">MKESTVIHFPFSVRRGVWLSKYSTFRIGGPANYFKEVNSAEEAQQVIQFLYSQNYPFIIVGKGSNCLFDDQGFDGFVLYNNIQKKEFLSETTIKVYSGMSFSFLGKTLSSSGYSGLEFAVGIPGSVGGAVFMNAGIGNQDIASAIESVEAINSNGDIISYQAAELEFGYRRSRFQNSKEFILSATFRLSKSASSIQIAKDLLQNKLLSQPYQQPSAGCIFRNPPGNYAGKLIDEAGLKGLSLGGAQISSKHANFIVNNGRATSHEVKELIQIVRDKLKSQGISLEEEVRIIPYRLP</sequence>
<dbReference type="EC" id="1.3.1.98" evidence="1"/>
<dbReference type="EMBL" id="AP006861">
    <property type="protein sequence ID" value="BAE81013.1"/>
    <property type="molecule type" value="Genomic_DNA"/>
</dbReference>
<dbReference type="RefSeq" id="WP_011457795.1">
    <property type="nucleotide sequence ID" value="NC_007899.1"/>
</dbReference>
<dbReference type="SMR" id="Q255M5"/>
<dbReference type="STRING" id="264202.CF0241"/>
<dbReference type="KEGG" id="cfe:CF0241"/>
<dbReference type="eggNOG" id="COG0812">
    <property type="taxonomic scope" value="Bacteria"/>
</dbReference>
<dbReference type="HOGENOM" id="CLU_035304_1_1_0"/>
<dbReference type="OrthoDB" id="9804753at2"/>
<dbReference type="UniPathway" id="UPA00219"/>
<dbReference type="Proteomes" id="UP000001260">
    <property type="component" value="Chromosome"/>
</dbReference>
<dbReference type="GO" id="GO:0005829">
    <property type="term" value="C:cytosol"/>
    <property type="evidence" value="ECO:0007669"/>
    <property type="project" value="TreeGrafter"/>
</dbReference>
<dbReference type="GO" id="GO:0071949">
    <property type="term" value="F:FAD binding"/>
    <property type="evidence" value="ECO:0007669"/>
    <property type="project" value="InterPro"/>
</dbReference>
<dbReference type="GO" id="GO:0008762">
    <property type="term" value="F:UDP-N-acetylmuramate dehydrogenase activity"/>
    <property type="evidence" value="ECO:0007669"/>
    <property type="project" value="UniProtKB-UniRule"/>
</dbReference>
<dbReference type="GO" id="GO:0051301">
    <property type="term" value="P:cell division"/>
    <property type="evidence" value="ECO:0007669"/>
    <property type="project" value="UniProtKB-KW"/>
</dbReference>
<dbReference type="GO" id="GO:0071555">
    <property type="term" value="P:cell wall organization"/>
    <property type="evidence" value="ECO:0007669"/>
    <property type="project" value="UniProtKB-KW"/>
</dbReference>
<dbReference type="GO" id="GO:0009252">
    <property type="term" value="P:peptidoglycan biosynthetic process"/>
    <property type="evidence" value="ECO:0007669"/>
    <property type="project" value="UniProtKB-UniRule"/>
</dbReference>
<dbReference type="GO" id="GO:0008360">
    <property type="term" value="P:regulation of cell shape"/>
    <property type="evidence" value="ECO:0007669"/>
    <property type="project" value="UniProtKB-KW"/>
</dbReference>
<dbReference type="Gene3D" id="3.30.465.10">
    <property type="match status" value="1"/>
</dbReference>
<dbReference type="Gene3D" id="3.90.78.10">
    <property type="entry name" value="UDP-N-acetylenolpyruvoylglucosamine reductase, C-terminal domain"/>
    <property type="match status" value="1"/>
</dbReference>
<dbReference type="Gene3D" id="3.30.43.10">
    <property type="entry name" value="Uridine Diphospho-n-acetylenolpyruvylglucosamine Reductase, domain 2"/>
    <property type="match status" value="1"/>
</dbReference>
<dbReference type="HAMAP" id="MF_00037">
    <property type="entry name" value="MurB"/>
    <property type="match status" value="1"/>
</dbReference>
<dbReference type="InterPro" id="IPR016166">
    <property type="entry name" value="FAD-bd_PCMH"/>
</dbReference>
<dbReference type="InterPro" id="IPR036318">
    <property type="entry name" value="FAD-bd_PCMH-like_sf"/>
</dbReference>
<dbReference type="InterPro" id="IPR016167">
    <property type="entry name" value="FAD-bd_PCMH_sub1"/>
</dbReference>
<dbReference type="InterPro" id="IPR016169">
    <property type="entry name" value="FAD-bd_PCMH_sub2"/>
</dbReference>
<dbReference type="InterPro" id="IPR003170">
    <property type="entry name" value="MurB"/>
</dbReference>
<dbReference type="InterPro" id="IPR011601">
    <property type="entry name" value="MurB_C"/>
</dbReference>
<dbReference type="InterPro" id="IPR036635">
    <property type="entry name" value="MurB_C_sf"/>
</dbReference>
<dbReference type="InterPro" id="IPR006094">
    <property type="entry name" value="Oxid_FAD_bind_N"/>
</dbReference>
<dbReference type="NCBIfam" id="TIGR00179">
    <property type="entry name" value="murB"/>
    <property type="match status" value="1"/>
</dbReference>
<dbReference type="NCBIfam" id="NF010480">
    <property type="entry name" value="PRK13905.1"/>
    <property type="match status" value="1"/>
</dbReference>
<dbReference type="PANTHER" id="PTHR21071">
    <property type="entry name" value="UDP-N-ACETYLENOLPYRUVOYLGLUCOSAMINE REDUCTASE"/>
    <property type="match status" value="1"/>
</dbReference>
<dbReference type="PANTHER" id="PTHR21071:SF4">
    <property type="entry name" value="UDP-N-ACETYLENOLPYRUVOYLGLUCOSAMINE REDUCTASE"/>
    <property type="match status" value="1"/>
</dbReference>
<dbReference type="Pfam" id="PF01565">
    <property type="entry name" value="FAD_binding_4"/>
    <property type="match status" value="1"/>
</dbReference>
<dbReference type="Pfam" id="PF02873">
    <property type="entry name" value="MurB_C"/>
    <property type="match status" value="1"/>
</dbReference>
<dbReference type="SUPFAM" id="SSF56176">
    <property type="entry name" value="FAD-binding/transporter-associated domain-like"/>
    <property type="match status" value="1"/>
</dbReference>
<dbReference type="SUPFAM" id="SSF56194">
    <property type="entry name" value="Uridine diphospho-N-Acetylenolpyruvylglucosamine reductase, MurB, C-terminal domain"/>
    <property type="match status" value="1"/>
</dbReference>
<dbReference type="PROSITE" id="PS51387">
    <property type="entry name" value="FAD_PCMH"/>
    <property type="match status" value="1"/>
</dbReference>
<reference key="1">
    <citation type="journal article" date="2006" name="DNA Res.">
        <title>Genome sequence of the cat pathogen, Chlamydophila felis.</title>
        <authorList>
            <person name="Azuma Y."/>
            <person name="Hirakawa H."/>
            <person name="Yamashita A."/>
            <person name="Cai Y."/>
            <person name="Rahman M.A."/>
            <person name="Suzuki H."/>
            <person name="Mitaku S."/>
            <person name="Toh H."/>
            <person name="Goto S."/>
            <person name="Murakami T."/>
            <person name="Sugi K."/>
            <person name="Hayashi H."/>
            <person name="Fukushi H."/>
            <person name="Hattori M."/>
            <person name="Kuhara S."/>
            <person name="Shirai M."/>
        </authorList>
    </citation>
    <scope>NUCLEOTIDE SEQUENCE [LARGE SCALE GENOMIC DNA]</scope>
    <source>
        <strain>Fe/C-56</strain>
    </source>
</reference>